<comment type="catalytic activity">
    <reaction evidence="1">
        <text>(6R)-10-formyltetrahydrofolate + 5-amino-1-(5-phospho-beta-D-ribosyl)imidazole-4-carboxamide = 5-formamido-1-(5-phospho-D-ribosyl)imidazole-4-carboxamide + (6S)-5,6,7,8-tetrahydrofolate</text>
        <dbReference type="Rhea" id="RHEA:22192"/>
        <dbReference type="ChEBI" id="CHEBI:57453"/>
        <dbReference type="ChEBI" id="CHEBI:58467"/>
        <dbReference type="ChEBI" id="CHEBI:58475"/>
        <dbReference type="ChEBI" id="CHEBI:195366"/>
        <dbReference type="EC" id="2.1.2.3"/>
    </reaction>
</comment>
<comment type="catalytic activity">
    <reaction evidence="1">
        <text>IMP + H2O = 5-formamido-1-(5-phospho-D-ribosyl)imidazole-4-carboxamide</text>
        <dbReference type="Rhea" id="RHEA:18445"/>
        <dbReference type="ChEBI" id="CHEBI:15377"/>
        <dbReference type="ChEBI" id="CHEBI:58053"/>
        <dbReference type="ChEBI" id="CHEBI:58467"/>
        <dbReference type="EC" id="3.5.4.10"/>
    </reaction>
</comment>
<comment type="pathway">
    <text evidence="1">Purine metabolism; IMP biosynthesis via de novo pathway; 5-formamido-1-(5-phospho-D-ribosyl)imidazole-4-carboxamide from 5-amino-1-(5-phospho-D-ribosyl)imidazole-4-carboxamide (10-formyl THF route): step 1/1.</text>
</comment>
<comment type="pathway">
    <text evidence="1">Purine metabolism; IMP biosynthesis via de novo pathway; IMP from 5-formamido-1-(5-phospho-D-ribosyl)imidazole-4-carboxamide: step 1/1.</text>
</comment>
<comment type="domain">
    <text evidence="1">The IMP cyclohydrolase activity resides in the N-terminal region.</text>
</comment>
<comment type="similarity">
    <text evidence="1 3">Belongs to the PurH family.</text>
</comment>
<feature type="chain" id="PRO_0000428158" description="Bifunctional purine biosynthesis protein PurH">
    <location>
        <begin position="1"/>
        <end position="523"/>
    </location>
</feature>
<feature type="domain" description="MGS-like" evidence="2">
    <location>
        <begin position="1"/>
        <end position="152"/>
    </location>
</feature>
<evidence type="ECO:0000255" key="1">
    <source>
        <dbReference type="HAMAP-Rule" id="MF_00139"/>
    </source>
</evidence>
<evidence type="ECO:0000255" key="2">
    <source>
        <dbReference type="PROSITE-ProRule" id="PRU01202"/>
    </source>
</evidence>
<evidence type="ECO:0000305" key="3"/>
<gene>
    <name evidence="1" type="primary">purH</name>
    <name type="ordered locus">MT0984</name>
</gene>
<keyword id="KW-0378">Hydrolase</keyword>
<keyword id="KW-0511">Multifunctional enzyme</keyword>
<keyword id="KW-0658">Purine biosynthesis</keyword>
<keyword id="KW-1185">Reference proteome</keyword>
<keyword id="KW-0808">Transferase</keyword>
<proteinExistence type="inferred from homology"/>
<reference key="1">
    <citation type="journal article" date="2002" name="J. Bacteriol.">
        <title>Whole-genome comparison of Mycobacterium tuberculosis clinical and laboratory strains.</title>
        <authorList>
            <person name="Fleischmann R.D."/>
            <person name="Alland D."/>
            <person name="Eisen J.A."/>
            <person name="Carpenter L."/>
            <person name="White O."/>
            <person name="Peterson J.D."/>
            <person name="DeBoy R.T."/>
            <person name="Dodson R.J."/>
            <person name="Gwinn M.L."/>
            <person name="Haft D.H."/>
            <person name="Hickey E.K."/>
            <person name="Kolonay J.F."/>
            <person name="Nelson W.C."/>
            <person name="Umayam L.A."/>
            <person name="Ermolaeva M.D."/>
            <person name="Salzberg S.L."/>
            <person name="Delcher A."/>
            <person name="Utterback T.R."/>
            <person name="Weidman J.F."/>
            <person name="Khouri H.M."/>
            <person name="Gill J."/>
            <person name="Mikula A."/>
            <person name="Bishai W."/>
            <person name="Jacobs W.R. Jr."/>
            <person name="Venter J.C."/>
            <person name="Fraser C.M."/>
        </authorList>
    </citation>
    <scope>NUCLEOTIDE SEQUENCE [LARGE SCALE GENOMIC DNA]</scope>
    <source>
        <strain>CDC 1551 / Oshkosh</strain>
    </source>
</reference>
<protein>
    <recommendedName>
        <fullName evidence="1">Bifunctional purine biosynthesis protein PurH</fullName>
    </recommendedName>
    <domain>
        <recommendedName>
            <fullName evidence="1">Phosphoribosylaminoimidazolecarboxamide formyltransferase</fullName>
            <ecNumber evidence="1">2.1.2.3</ecNumber>
        </recommendedName>
        <alternativeName>
            <fullName evidence="1">AICAR transformylase</fullName>
        </alternativeName>
    </domain>
    <domain>
        <recommendedName>
            <fullName evidence="1">IMP cyclohydrolase</fullName>
            <ecNumber evidence="1">3.5.4.10</ecNumber>
        </recommendedName>
        <alternativeName>
            <fullName evidence="1">ATIC</fullName>
        </alternativeName>
        <alternativeName>
            <fullName evidence="1">IMP synthase</fullName>
        </alternativeName>
        <alternativeName>
            <fullName evidence="1">Inosinicase</fullName>
        </alternativeName>
    </domain>
</protein>
<name>PUR9_MYCTO</name>
<organism>
    <name type="scientific">Mycobacterium tuberculosis (strain CDC 1551 / Oshkosh)</name>
    <dbReference type="NCBI Taxonomy" id="83331"/>
    <lineage>
        <taxon>Bacteria</taxon>
        <taxon>Bacillati</taxon>
        <taxon>Actinomycetota</taxon>
        <taxon>Actinomycetes</taxon>
        <taxon>Mycobacteriales</taxon>
        <taxon>Mycobacteriaceae</taxon>
        <taxon>Mycobacterium</taxon>
        <taxon>Mycobacterium tuberculosis complex</taxon>
    </lineage>
</organism>
<sequence>MSTDDGRRPIRRALISVYDKTGLVDLAQGLSAAGVEIISTGSTAKTIADTGIPVTPVEQLTGFPEVLDGRVKTLHPRVHAGLLADLRKSEHAAALEQLGIEAFELVVVNLYPFSQTVESGASVDDCVEQIDIGGPAMVRAAAKNHPSAAVVTDPLGYHGVLAALRAGGFTLAERKRLASLAFQHIAEYDIAVASWMQQTLAPEHPVAAFPQWFGRSWRRVAMLRYGENPHQQAALYGDPTAWPGLAQAEQLHGKDMSYNNFTDADAAWRAAFDHEQTCVAIIKHANPCGIAISSVSVADAHRKAHECDPLSAYGGVIAANTEVSVEMAEYVSTIFTEVIVAPGYAPGALDVLARKKNIRVLVAAEPLAGGSELRPISGGLLIQQSDQLDAHGDNPANWTLATGSPADPATLTDLVFAWRACRAVKSNAIVIAADGATVGVGMGQVNRVDAARLAVERGGERVRGAVAASDAFFPFPDGLETLAAAGVTAVVHPGGSVRDEEVTEAAAKAGVTLYLTGARHFAH</sequence>
<accession>P9WHM6</accession>
<accession>L0T5A3</accession>
<accession>P67541</accession>
<accession>P71553</accession>
<dbReference type="EC" id="2.1.2.3" evidence="1"/>
<dbReference type="EC" id="3.5.4.10" evidence="1"/>
<dbReference type="EMBL" id="AE000516">
    <property type="protein sequence ID" value="AAK45232.1"/>
    <property type="molecule type" value="Genomic_DNA"/>
</dbReference>
<dbReference type="PIR" id="C70717">
    <property type="entry name" value="C70717"/>
</dbReference>
<dbReference type="RefSeq" id="WP_003404890.1">
    <property type="nucleotide sequence ID" value="NZ_KK341227.1"/>
</dbReference>
<dbReference type="SMR" id="P9WHM6"/>
<dbReference type="KEGG" id="mtc:MT0984"/>
<dbReference type="PATRIC" id="fig|83331.31.peg.1056"/>
<dbReference type="HOGENOM" id="CLU_016316_5_2_11"/>
<dbReference type="UniPathway" id="UPA00074">
    <property type="reaction ID" value="UER00133"/>
</dbReference>
<dbReference type="UniPathway" id="UPA00074">
    <property type="reaction ID" value="UER00135"/>
</dbReference>
<dbReference type="Proteomes" id="UP000001020">
    <property type="component" value="Chromosome"/>
</dbReference>
<dbReference type="GO" id="GO:0005829">
    <property type="term" value="C:cytosol"/>
    <property type="evidence" value="ECO:0007669"/>
    <property type="project" value="TreeGrafter"/>
</dbReference>
<dbReference type="GO" id="GO:0003937">
    <property type="term" value="F:IMP cyclohydrolase activity"/>
    <property type="evidence" value="ECO:0007669"/>
    <property type="project" value="UniProtKB-UniRule"/>
</dbReference>
<dbReference type="GO" id="GO:0004643">
    <property type="term" value="F:phosphoribosylaminoimidazolecarboxamide formyltransferase activity"/>
    <property type="evidence" value="ECO:0007669"/>
    <property type="project" value="UniProtKB-UniRule"/>
</dbReference>
<dbReference type="GO" id="GO:0006189">
    <property type="term" value="P:'de novo' IMP biosynthetic process"/>
    <property type="evidence" value="ECO:0007669"/>
    <property type="project" value="UniProtKB-UniRule"/>
</dbReference>
<dbReference type="CDD" id="cd01421">
    <property type="entry name" value="IMPCH"/>
    <property type="match status" value="1"/>
</dbReference>
<dbReference type="FunFam" id="3.40.140.20:FF:000001">
    <property type="entry name" value="Bifunctional purine biosynthesis protein PurH"/>
    <property type="match status" value="1"/>
</dbReference>
<dbReference type="FunFam" id="3.40.50.1380:FF:000001">
    <property type="entry name" value="Bifunctional purine biosynthesis protein PurH"/>
    <property type="match status" value="1"/>
</dbReference>
<dbReference type="Gene3D" id="3.40.140.20">
    <property type="match status" value="2"/>
</dbReference>
<dbReference type="Gene3D" id="3.40.50.1380">
    <property type="entry name" value="Methylglyoxal synthase-like domain"/>
    <property type="match status" value="1"/>
</dbReference>
<dbReference type="HAMAP" id="MF_00139">
    <property type="entry name" value="PurH"/>
    <property type="match status" value="1"/>
</dbReference>
<dbReference type="InterPro" id="IPR024051">
    <property type="entry name" value="AICAR_Tfase_dup_dom_sf"/>
</dbReference>
<dbReference type="InterPro" id="IPR016193">
    <property type="entry name" value="Cytidine_deaminase-like"/>
</dbReference>
<dbReference type="InterPro" id="IPR011607">
    <property type="entry name" value="MGS-like_dom"/>
</dbReference>
<dbReference type="InterPro" id="IPR036914">
    <property type="entry name" value="MGS-like_dom_sf"/>
</dbReference>
<dbReference type="InterPro" id="IPR002695">
    <property type="entry name" value="PurH-like"/>
</dbReference>
<dbReference type="NCBIfam" id="NF002049">
    <property type="entry name" value="PRK00881.1"/>
    <property type="match status" value="1"/>
</dbReference>
<dbReference type="NCBIfam" id="TIGR00355">
    <property type="entry name" value="purH"/>
    <property type="match status" value="1"/>
</dbReference>
<dbReference type="PANTHER" id="PTHR11692:SF0">
    <property type="entry name" value="BIFUNCTIONAL PURINE BIOSYNTHESIS PROTEIN ATIC"/>
    <property type="match status" value="1"/>
</dbReference>
<dbReference type="PANTHER" id="PTHR11692">
    <property type="entry name" value="BIFUNCTIONAL PURINE BIOSYNTHESIS PROTEIN PURH"/>
    <property type="match status" value="1"/>
</dbReference>
<dbReference type="Pfam" id="PF01808">
    <property type="entry name" value="AICARFT_IMPCHas"/>
    <property type="match status" value="1"/>
</dbReference>
<dbReference type="Pfam" id="PF02142">
    <property type="entry name" value="MGS"/>
    <property type="match status" value="1"/>
</dbReference>
<dbReference type="PIRSF" id="PIRSF000414">
    <property type="entry name" value="AICARFT_IMPCHas"/>
    <property type="match status" value="1"/>
</dbReference>
<dbReference type="SMART" id="SM00798">
    <property type="entry name" value="AICARFT_IMPCHas"/>
    <property type="match status" value="1"/>
</dbReference>
<dbReference type="SMART" id="SM00851">
    <property type="entry name" value="MGS"/>
    <property type="match status" value="1"/>
</dbReference>
<dbReference type="SUPFAM" id="SSF53927">
    <property type="entry name" value="Cytidine deaminase-like"/>
    <property type="match status" value="1"/>
</dbReference>
<dbReference type="SUPFAM" id="SSF52335">
    <property type="entry name" value="Methylglyoxal synthase-like"/>
    <property type="match status" value="1"/>
</dbReference>
<dbReference type="PROSITE" id="PS51855">
    <property type="entry name" value="MGS"/>
    <property type="match status" value="1"/>
</dbReference>